<gene>
    <name evidence="2" type="primary">Cdc42</name>
    <name type="ORF">AAEL008543</name>
</gene>
<feature type="chain" id="PRO_0000312819" description="Cdc42 homolog" evidence="3">
    <location>
        <begin position="1"/>
        <end position="188"/>
    </location>
</feature>
<feature type="propeptide" id="PRO_0000312820" description="Removed in mature form" evidence="3">
    <location>
        <begin position="189"/>
        <end position="191"/>
    </location>
</feature>
<feature type="short sequence motif" description="Effector region" evidence="4">
    <location>
        <begin position="32"/>
        <end position="40"/>
    </location>
</feature>
<feature type="binding site" evidence="3">
    <location>
        <begin position="10"/>
        <end position="17"/>
    </location>
    <ligand>
        <name>GTP</name>
        <dbReference type="ChEBI" id="CHEBI:37565"/>
    </ligand>
</feature>
<feature type="binding site" evidence="3">
    <location>
        <begin position="57"/>
        <end position="61"/>
    </location>
    <ligand>
        <name>GTP</name>
        <dbReference type="ChEBI" id="CHEBI:37565"/>
    </ligand>
</feature>
<feature type="binding site" evidence="3">
    <location>
        <begin position="115"/>
        <end position="118"/>
    </location>
    <ligand>
        <name>GTP</name>
        <dbReference type="ChEBI" id="CHEBI:37565"/>
    </ligand>
</feature>
<feature type="modified residue" description="Cysteine methyl ester" evidence="3">
    <location>
        <position position="188"/>
    </location>
</feature>
<feature type="lipid moiety-binding region" description="S-geranylgeranyl cysteine" evidence="3">
    <location>
        <position position="188"/>
    </location>
</feature>
<evidence type="ECO:0000250" key="1"/>
<evidence type="ECO:0000250" key="2">
    <source>
        <dbReference type="UniProtKB" id="P40793"/>
    </source>
</evidence>
<evidence type="ECO:0000250" key="3">
    <source>
        <dbReference type="UniProtKB" id="P61585"/>
    </source>
</evidence>
<evidence type="ECO:0000255" key="4"/>
<evidence type="ECO:0000312" key="5">
    <source>
        <dbReference type="EMBL" id="EAT39696.1"/>
    </source>
</evidence>
<keyword id="KW-0965">Cell junction</keyword>
<keyword id="KW-1003">Cell membrane</keyword>
<keyword id="KW-0217">Developmental protein</keyword>
<keyword id="KW-0342">GTP-binding</keyword>
<keyword id="KW-0449">Lipoprotein</keyword>
<keyword id="KW-0472">Membrane</keyword>
<keyword id="KW-0488">Methylation</keyword>
<keyword id="KW-0547">Nucleotide-binding</keyword>
<keyword id="KW-0636">Prenylation</keyword>
<keyword id="KW-1185">Reference proteome</keyword>
<name>CDC42_AEDAE</name>
<accession>Q16YG0</accession>
<sequence>MQTIKCVVVGDGAVGKTCLLISYTTNKFPSEYVPTVFDNYAVTVMIGGEPYTLGLFDTAGQEDYDRLRPLSYPQTDVFLVCFSVVSPSSFENVKEKWVPEITHHCQKTPFLLVGTQIDLRDEQSTLEKLAKNKQKPITLEQGEKLAKELKAVKYVECSALTQKGLKNVFDEAILAALEPPEPTKKRKCKFL</sequence>
<proteinExistence type="inferred from homology"/>
<comment type="function">
    <text evidence="1">Regulates mbt kinase activity and is also required to recruit mbt to adherens junctions. Together with mbt, regulates photoreceptor cell morphogenesis (By similarity).</text>
</comment>
<comment type="subcellular location">
    <subcellularLocation>
        <location evidence="2">Cell junction</location>
        <location evidence="2">Adherens junction</location>
    </subcellularLocation>
    <subcellularLocation>
        <location evidence="1">Cell membrane</location>
        <topology evidence="2">Lipid-anchor</topology>
    </subcellularLocation>
</comment>
<comment type="similarity">
    <text evidence="4">Belongs to the small GTPase superfamily. Rho family. CDC42 subfamily.</text>
</comment>
<dbReference type="EMBL" id="CH477516">
    <property type="protein sequence ID" value="EAT39696.1"/>
    <property type="molecule type" value="Genomic_DNA"/>
</dbReference>
<dbReference type="SMR" id="Q16YG0"/>
<dbReference type="FunCoup" id="Q16YG0">
    <property type="interactions" value="1974"/>
</dbReference>
<dbReference type="STRING" id="7159.Q16YG0"/>
<dbReference type="PaxDb" id="7159-AAEL008543-PA"/>
<dbReference type="EnsemblMetazoa" id="AAEL008543-RA">
    <property type="protein sequence ID" value="AAEL008543-PA"/>
    <property type="gene ID" value="AAEL008543"/>
</dbReference>
<dbReference type="EnsemblMetazoa" id="AAEL008543-RB">
    <property type="protein sequence ID" value="AAEL008543-PB"/>
    <property type="gene ID" value="AAEL008543"/>
</dbReference>
<dbReference type="GeneID" id="5570780"/>
<dbReference type="KEGG" id="aag:5570780"/>
<dbReference type="CTD" id="998"/>
<dbReference type="VEuPathDB" id="VectorBase:AAEL008543"/>
<dbReference type="eggNOG" id="KOG0393">
    <property type="taxonomic scope" value="Eukaryota"/>
</dbReference>
<dbReference type="HOGENOM" id="CLU_041217_21_3_1"/>
<dbReference type="InParanoid" id="Q16YG0"/>
<dbReference type="OMA" id="GDEPYTF"/>
<dbReference type="OrthoDB" id="8830751at2759"/>
<dbReference type="PhylomeDB" id="Q16YG0"/>
<dbReference type="Proteomes" id="UP000008820">
    <property type="component" value="Chromosome 3"/>
</dbReference>
<dbReference type="Proteomes" id="UP000682892">
    <property type="component" value="Unassembled WGS sequence"/>
</dbReference>
<dbReference type="GO" id="GO:0005912">
    <property type="term" value="C:adherens junction"/>
    <property type="evidence" value="ECO:0007669"/>
    <property type="project" value="UniProtKB-SubCell"/>
</dbReference>
<dbReference type="GO" id="GO:0005737">
    <property type="term" value="C:cytoplasm"/>
    <property type="evidence" value="ECO:0007669"/>
    <property type="project" value="UniProtKB-ARBA"/>
</dbReference>
<dbReference type="GO" id="GO:0005886">
    <property type="term" value="C:plasma membrane"/>
    <property type="evidence" value="ECO:0007669"/>
    <property type="project" value="UniProtKB-SubCell"/>
</dbReference>
<dbReference type="GO" id="GO:0005525">
    <property type="term" value="F:GTP binding"/>
    <property type="evidence" value="ECO:0007669"/>
    <property type="project" value="UniProtKB-KW"/>
</dbReference>
<dbReference type="GO" id="GO:0003924">
    <property type="term" value="F:GTPase activity"/>
    <property type="evidence" value="ECO:0007669"/>
    <property type="project" value="InterPro"/>
</dbReference>
<dbReference type="GO" id="GO:0001667">
    <property type="term" value="P:ameboidal-type cell migration"/>
    <property type="evidence" value="ECO:0007669"/>
    <property type="project" value="UniProtKB-ARBA"/>
</dbReference>
<dbReference type="GO" id="GO:0009653">
    <property type="term" value="P:anatomical structure morphogenesis"/>
    <property type="evidence" value="ECO:0007669"/>
    <property type="project" value="UniProtKB-ARBA"/>
</dbReference>
<dbReference type="GO" id="GO:0022412">
    <property type="term" value="P:cellular process involved in reproduction in multicellular organism"/>
    <property type="evidence" value="ECO:0007669"/>
    <property type="project" value="UniProtKB-ARBA"/>
</dbReference>
<dbReference type="GO" id="GO:0003006">
    <property type="term" value="P:developmental process involved in reproduction"/>
    <property type="evidence" value="ECO:0007669"/>
    <property type="project" value="UniProtKB-ARBA"/>
</dbReference>
<dbReference type="GO" id="GO:0035099">
    <property type="term" value="P:hemocyte migration"/>
    <property type="evidence" value="ECO:0007669"/>
    <property type="project" value="UniProtKB-ARBA"/>
</dbReference>
<dbReference type="GO" id="GO:0045185">
    <property type="term" value="P:maintenance of protein location"/>
    <property type="evidence" value="ECO:0000250"/>
    <property type="project" value="UniProtKB"/>
</dbReference>
<dbReference type="GO" id="GO:0035006">
    <property type="term" value="P:melanization defense response"/>
    <property type="evidence" value="ECO:0007669"/>
    <property type="project" value="UniProtKB-ARBA"/>
</dbReference>
<dbReference type="GO" id="GO:0051130">
    <property type="term" value="P:positive regulation of cellular component organization"/>
    <property type="evidence" value="ECO:0007669"/>
    <property type="project" value="UniProtKB-ARBA"/>
</dbReference>
<dbReference type="GO" id="GO:0045860">
    <property type="term" value="P:positive regulation of protein kinase activity"/>
    <property type="evidence" value="ECO:0000250"/>
    <property type="project" value="UniProtKB"/>
</dbReference>
<dbReference type="GO" id="GO:0007264">
    <property type="term" value="P:small GTPase-mediated signal transduction"/>
    <property type="evidence" value="ECO:0007669"/>
    <property type="project" value="InterPro"/>
</dbReference>
<dbReference type="CDD" id="cd01874">
    <property type="entry name" value="Cdc42"/>
    <property type="match status" value="1"/>
</dbReference>
<dbReference type="FunFam" id="3.40.50.300:FF:000167">
    <property type="entry name" value="Cell division control protein 42 homolog"/>
    <property type="match status" value="1"/>
</dbReference>
<dbReference type="Gene3D" id="3.40.50.300">
    <property type="entry name" value="P-loop containing nucleotide triphosphate hydrolases"/>
    <property type="match status" value="1"/>
</dbReference>
<dbReference type="InterPro" id="IPR037874">
    <property type="entry name" value="Cdc42"/>
</dbReference>
<dbReference type="InterPro" id="IPR027417">
    <property type="entry name" value="P-loop_NTPase"/>
</dbReference>
<dbReference type="InterPro" id="IPR005225">
    <property type="entry name" value="Small_GTP-bd"/>
</dbReference>
<dbReference type="InterPro" id="IPR001806">
    <property type="entry name" value="Small_GTPase"/>
</dbReference>
<dbReference type="InterPro" id="IPR003578">
    <property type="entry name" value="Small_GTPase_Rho"/>
</dbReference>
<dbReference type="NCBIfam" id="TIGR00231">
    <property type="entry name" value="small_GTP"/>
    <property type="match status" value="1"/>
</dbReference>
<dbReference type="PANTHER" id="PTHR24072">
    <property type="entry name" value="RHO FAMILY GTPASE"/>
    <property type="match status" value="1"/>
</dbReference>
<dbReference type="Pfam" id="PF00071">
    <property type="entry name" value="Ras"/>
    <property type="match status" value="1"/>
</dbReference>
<dbReference type="PRINTS" id="PR00449">
    <property type="entry name" value="RASTRNSFRMNG"/>
</dbReference>
<dbReference type="SMART" id="SM00175">
    <property type="entry name" value="RAB"/>
    <property type="match status" value="1"/>
</dbReference>
<dbReference type="SMART" id="SM00173">
    <property type="entry name" value="RAS"/>
    <property type="match status" value="1"/>
</dbReference>
<dbReference type="SMART" id="SM00174">
    <property type="entry name" value="RHO"/>
    <property type="match status" value="1"/>
</dbReference>
<dbReference type="SUPFAM" id="SSF52540">
    <property type="entry name" value="P-loop containing nucleoside triphosphate hydrolases"/>
    <property type="match status" value="1"/>
</dbReference>
<dbReference type="PROSITE" id="PS51420">
    <property type="entry name" value="RHO"/>
    <property type="match status" value="1"/>
</dbReference>
<protein>
    <recommendedName>
        <fullName>Cdc42 homolog</fullName>
    </recommendedName>
</protein>
<organism>
    <name type="scientific">Aedes aegypti</name>
    <name type="common">Yellowfever mosquito</name>
    <name type="synonym">Culex aegypti</name>
    <dbReference type="NCBI Taxonomy" id="7159"/>
    <lineage>
        <taxon>Eukaryota</taxon>
        <taxon>Metazoa</taxon>
        <taxon>Ecdysozoa</taxon>
        <taxon>Arthropoda</taxon>
        <taxon>Hexapoda</taxon>
        <taxon>Insecta</taxon>
        <taxon>Pterygota</taxon>
        <taxon>Neoptera</taxon>
        <taxon>Endopterygota</taxon>
        <taxon>Diptera</taxon>
        <taxon>Nematocera</taxon>
        <taxon>Culicoidea</taxon>
        <taxon>Culicidae</taxon>
        <taxon>Culicinae</taxon>
        <taxon>Aedini</taxon>
        <taxon>Aedes</taxon>
        <taxon>Stegomyia</taxon>
    </lineage>
</organism>
<reference evidence="5" key="1">
    <citation type="journal article" date="2007" name="Science">
        <title>Genome sequence of Aedes aegypti, a major arbovirus vector.</title>
        <authorList>
            <person name="Nene V."/>
            <person name="Wortman J.R."/>
            <person name="Lawson D."/>
            <person name="Haas B.J."/>
            <person name="Kodira C.D."/>
            <person name="Tu Z.J."/>
            <person name="Loftus B.J."/>
            <person name="Xi Z."/>
            <person name="Megy K."/>
            <person name="Grabherr M."/>
            <person name="Ren Q."/>
            <person name="Zdobnov E.M."/>
            <person name="Lobo N.F."/>
            <person name="Campbell K.S."/>
            <person name="Brown S.E."/>
            <person name="Bonaldo M.F."/>
            <person name="Zhu J."/>
            <person name="Sinkins S.P."/>
            <person name="Hogenkamp D.G."/>
            <person name="Amedeo P."/>
            <person name="Arensburger P."/>
            <person name="Atkinson P.W."/>
            <person name="Bidwell S.L."/>
            <person name="Biedler J."/>
            <person name="Birney E."/>
            <person name="Bruggner R.V."/>
            <person name="Costas J."/>
            <person name="Coy M.R."/>
            <person name="Crabtree J."/>
            <person name="Crawford M."/>
            <person name="DeBruyn B."/>
            <person name="DeCaprio D."/>
            <person name="Eiglmeier K."/>
            <person name="Eisenstadt E."/>
            <person name="El-Dorry H."/>
            <person name="Gelbart W.M."/>
            <person name="Gomes S.L."/>
            <person name="Hammond M."/>
            <person name="Hannick L.I."/>
            <person name="Hogan J.R."/>
            <person name="Holmes M.H."/>
            <person name="Jaffe D."/>
            <person name="Johnston S.J."/>
            <person name="Kennedy R.C."/>
            <person name="Koo H."/>
            <person name="Kravitz S."/>
            <person name="Kriventseva E.V."/>
            <person name="Kulp D."/>
            <person name="Labutti K."/>
            <person name="Lee E."/>
            <person name="Li S."/>
            <person name="Lovin D.D."/>
            <person name="Mao C."/>
            <person name="Mauceli E."/>
            <person name="Menck C.F."/>
            <person name="Miller J.R."/>
            <person name="Montgomery P."/>
            <person name="Mori A."/>
            <person name="Nascimento A.L."/>
            <person name="Naveira H.F."/>
            <person name="Nusbaum C."/>
            <person name="O'Leary S.B."/>
            <person name="Orvis J."/>
            <person name="Pertea M."/>
            <person name="Quesneville H."/>
            <person name="Reidenbach K.R."/>
            <person name="Rogers Y.-H.C."/>
            <person name="Roth C.W."/>
            <person name="Schneider J.R."/>
            <person name="Schatz M."/>
            <person name="Shumway M."/>
            <person name="Stanke M."/>
            <person name="Stinson E.O."/>
            <person name="Tubio J.M.C."/>
            <person name="Vanzee J.P."/>
            <person name="Verjovski-Almeida S."/>
            <person name="Werner D."/>
            <person name="White O.R."/>
            <person name="Wyder S."/>
            <person name="Zeng Q."/>
            <person name="Zhao Q."/>
            <person name="Zhao Y."/>
            <person name="Hill C.A."/>
            <person name="Raikhel A.S."/>
            <person name="Soares M.B."/>
            <person name="Knudson D.L."/>
            <person name="Lee N.H."/>
            <person name="Galagan J."/>
            <person name="Salzberg S.L."/>
            <person name="Paulsen I.T."/>
            <person name="Dimopoulos G."/>
            <person name="Collins F.H."/>
            <person name="Bruce B."/>
            <person name="Fraser-Liggett C.M."/>
            <person name="Severson D.W."/>
        </authorList>
    </citation>
    <scope>NUCLEOTIDE SEQUENCE [LARGE SCALE GENOMIC DNA]</scope>
    <source>
        <strain>LVPib12</strain>
    </source>
</reference>